<sequence>MRITIRDIQQMRDRGERIPMVTAYDYTSAQIADRAGIPLILVGDSLGMVVLGYNSTVPVTLDDMIHHTRAVVRGTQKALVIGDLPFLTYTSPEQAMQSAGRMLQEAGAQAVKLEGGVHIAPTIARLVQAGIPVMGHIGFTPQAVNQIGLRVQGRRAAEAQRLLADALAVQEAGAFAIVLELVPAELAQAITERLRIPTIGIGAGAGCSGQVQVWHDMLGLYSDFLPRHAKRYADLATIIAEALSQYASDVRNGTFPGPEHSSRMDPAELAAALGSQDQATE</sequence>
<name>PANB_CHLAA</name>
<feature type="chain" id="PRO_1000096948" description="3-methyl-2-oxobutanoate hydroxymethyltransferase">
    <location>
        <begin position="1"/>
        <end position="281"/>
    </location>
</feature>
<feature type="region of interest" description="Disordered" evidence="2">
    <location>
        <begin position="251"/>
        <end position="281"/>
    </location>
</feature>
<feature type="active site" description="Proton acceptor" evidence="1">
    <location>
        <position position="180"/>
    </location>
</feature>
<feature type="binding site" evidence="1">
    <location>
        <begin position="44"/>
        <end position="45"/>
    </location>
    <ligand>
        <name>3-methyl-2-oxobutanoate</name>
        <dbReference type="ChEBI" id="CHEBI:11851"/>
    </ligand>
</feature>
<feature type="binding site" evidence="1">
    <location>
        <position position="44"/>
    </location>
    <ligand>
        <name>Mg(2+)</name>
        <dbReference type="ChEBI" id="CHEBI:18420"/>
    </ligand>
</feature>
<feature type="binding site" evidence="1">
    <location>
        <position position="83"/>
    </location>
    <ligand>
        <name>3-methyl-2-oxobutanoate</name>
        <dbReference type="ChEBI" id="CHEBI:11851"/>
    </ligand>
</feature>
<feature type="binding site" evidence="1">
    <location>
        <position position="83"/>
    </location>
    <ligand>
        <name>Mg(2+)</name>
        <dbReference type="ChEBI" id="CHEBI:18420"/>
    </ligand>
</feature>
<feature type="binding site" evidence="1">
    <location>
        <position position="112"/>
    </location>
    <ligand>
        <name>3-methyl-2-oxobutanoate</name>
        <dbReference type="ChEBI" id="CHEBI:11851"/>
    </ligand>
</feature>
<feature type="binding site" evidence="1">
    <location>
        <position position="114"/>
    </location>
    <ligand>
        <name>Mg(2+)</name>
        <dbReference type="ChEBI" id="CHEBI:18420"/>
    </ligand>
</feature>
<comment type="function">
    <text evidence="1">Catalyzes the reversible reaction in which hydroxymethyl group from 5,10-methylenetetrahydrofolate is transferred onto alpha-ketoisovalerate to form ketopantoate.</text>
</comment>
<comment type="catalytic activity">
    <reaction evidence="1">
        <text>3-methyl-2-oxobutanoate + (6R)-5,10-methylene-5,6,7,8-tetrahydrofolate + H2O = 2-dehydropantoate + (6S)-5,6,7,8-tetrahydrofolate</text>
        <dbReference type="Rhea" id="RHEA:11824"/>
        <dbReference type="ChEBI" id="CHEBI:11561"/>
        <dbReference type="ChEBI" id="CHEBI:11851"/>
        <dbReference type="ChEBI" id="CHEBI:15377"/>
        <dbReference type="ChEBI" id="CHEBI:15636"/>
        <dbReference type="ChEBI" id="CHEBI:57453"/>
        <dbReference type="EC" id="2.1.2.11"/>
    </reaction>
</comment>
<comment type="cofactor">
    <cofactor evidence="1">
        <name>Mg(2+)</name>
        <dbReference type="ChEBI" id="CHEBI:18420"/>
    </cofactor>
    <text evidence="1">Binds 1 Mg(2+) ion per subunit.</text>
</comment>
<comment type="pathway">
    <text evidence="1">Cofactor biosynthesis; (R)-pantothenate biosynthesis; (R)-pantoate from 3-methyl-2-oxobutanoate: step 1/2.</text>
</comment>
<comment type="subunit">
    <text evidence="1">Homodecamer; pentamer of dimers.</text>
</comment>
<comment type="subcellular location">
    <subcellularLocation>
        <location evidence="1">Cytoplasm</location>
    </subcellularLocation>
</comment>
<comment type="similarity">
    <text evidence="1">Belongs to the PanB family.</text>
</comment>
<dbReference type="EC" id="2.1.2.11" evidence="1"/>
<dbReference type="EMBL" id="CP000909">
    <property type="protein sequence ID" value="ABY35417.1"/>
    <property type="molecule type" value="Genomic_DNA"/>
</dbReference>
<dbReference type="RefSeq" id="WP_012258071.1">
    <property type="nucleotide sequence ID" value="NC_010175.1"/>
</dbReference>
<dbReference type="RefSeq" id="YP_001635806.1">
    <property type="nucleotide sequence ID" value="NC_010175.1"/>
</dbReference>
<dbReference type="SMR" id="A9WFR7"/>
<dbReference type="FunCoup" id="A9WFR7">
    <property type="interactions" value="388"/>
</dbReference>
<dbReference type="STRING" id="324602.Caur_2208"/>
<dbReference type="EnsemblBacteria" id="ABY35417">
    <property type="protein sequence ID" value="ABY35417"/>
    <property type="gene ID" value="Caur_2208"/>
</dbReference>
<dbReference type="KEGG" id="cau:Caur_2208"/>
<dbReference type="PATRIC" id="fig|324602.8.peg.2503"/>
<dbReference type="eggNOG" id="COG0413">
    <property type="taxonomic scope" value="Bacteria"/>
</dbReference>
<dbReference type="HOGENOM" id="CLU_036645_1_0_0"/>
<dbReference type="InParanoid" id="A9WFR7"/>
<dbReference type="UniPathway" id="UPA00028">
    <property type="reaction ID" value="UER00003"/>
</dbReference>
<dbReference type="Proteomes" id="UP000002008">
    <property type="component" value="Chromosome"/>
</dbReference>
<dbReference type="GO" id="GO:0005737">
    <property type="term" value="C:cytoplasm"/>
    <property type="evidence" value="ECO:0000318"/>
    <property type="project" value="GO_Central"/>
</dbReference>
<dbReference type="GO" id="GO:0003864">
    <property type="term" value="F:3-methyl-2-oxobutanoate hydroxymethyltransferase activity"/>
    <property type="evidence" value="ECO:0000318"/>
    <property type="project" value="GO_Central"/>
</dbReference>
<dbReference type="GO" id="GO:0000287">
    <property type="term" value="F:magnesium ion binding"/>
    <property type="evidence" value="ECO:0000318"/>
    <property type="project" value="GO_Central"/>
</dbReference>
<dbReference type="GO" id="GO:0015940">
    <property type="term" value="P:pantothenate biosynthetic process"/>
    <property type="evidence" value="ECO:0000318"/>
    <property type="project" value="GO_Central"/>
</dbReference>
<dbReference type="CDD" id="cd06557">
    <property type="entry name" value="KPHMT-like"/>
    <property type="match status" value="1"/>
</dbReference>
<dbReference type="FunFam" id="3.20.20.60:FF:000003">
    <property type="entry name" value="3-methyl-2-oxobutanoate hydroxymethyltransferase"/>
    <property type="match status" value="1"/>
</dbReference>
<dbReference type="Gene3D" id="3.20.20.60">
    <property type="entry name" value="Phosphoenolpyruvate-binding domains"/>
    <property type="match status" value="1"/>
</dbReference>
<dbReference type="HAMAP" id="MF_00156">
    <property type="entry name" value="PanB"/>
    <property type="match status" value="1"/>
</dbReference>
<dbReference type="InterPro" id="IPR003700">
    <property type="entry name" value="Pantoate_hydroxy_MeTrfase"/>
</dbReference>
<dbReference type="InterPro" id="IPR015813">
    <property type="entry name" value="Pyrv/PenolPyrv_kinase-like_dom"/>
</dbReference>
<dbReference type="InterPro" id="IPR040442">
    <property type="entry name" value="Pyrv_kinase-like_dom_sf"/>
</dbReference>
<dbReference type="NCBIfam" id="TIGR00222">
    <property type="entry name" value="panB"/>
    <property type="match status" value="1"/>
</dbReference>
<dbReference type="NCBIfam" id="NF001452">
    <property type="entry name" value="PRK00311.1"/>
    <property type="match status" value="1"/>
</dbReference>
<dbReference type="PANTHER" id="PTHR20881">
    <property type="entry name" value="3-METHYL-2-OXOBUTANOATE HYDROXYMETHYLTRANSFERASE"/>
    <property type="match status" value="1"/>
</dbReference>
<dbReference type="PANTHER" id="PTHR20881:SF0">
    <property type="entry name" value="3-METHYL-2-OXOBUTANOATE HYDROXYMETHYLTRANSFERASE"/>
    <property type="match status" value="1"/>
</dbReference>
<dbReference type="Pfam" id="PF02548">
    <property type="entry name" value="Pantoate_transf"/>
    <property type="match status" value="1"/>
</dbReference>
<dbReference type="PIRSF" id="PIRSF000388">
    <property type="entry name" value="Pantoate_hydroxy_MeTrfase"/>
    <property type="match status" value="1"/>
</dbReference>
<dbReference type="SUPFAM" id="SSF51621">
    <property type="entry name" value="Phosphoenolpyruvate/pyruvate domain"/>
    <property type="match status" value="1"/>
</dbReference>
<evidence type="ECO:0000255" key="1">
    <source>
        <dbReference type="HAMAP-Rule" id="MF_00156"/>
    </source>
</evidence>
<evidence type="ECO:0000256" key="2">
    <source>
        <dbReference type="SAM" id="MobiDB-lite"/>
    </source>
</evidence>
<gene>
    <name evidence="1" type="primary">panB</name>
    <name type="ordered locus">Caur_2208</name>
</gene>
<proteinExistence type="inferred from homology"/>
<keyword id="KW-0963">Cytoplasm</keyword>
<keyword id="KW-0460">Magnesium</keyword>
<keyword id="KW-0479">Metal-binding</keyword>
<keyword id="KW-0566">Pantothenate biosynthesis</keyword>
<keyword id="KW-1185">Reference proteome</keyword>
<keyword id="KW-0808">Transferase</keyword>
<accession>A9WFR7</accession>
<reference key="1">
    <citation type="journal article" date="2011" name="BMC Genomics">
        <title>Complete genome sequence of the filamentous anoxygenic phototrophic bacterium Chloroflexus aurantiacus.</title>
        <authorList>
            <person name="Tang K.H."/>
            <person name="Barry K."/>
            <person name="Chertkov O."/>
            <person name="Dalin E."/>
            <person name="Han C.S."/>
            <person name="Hauser L.J."/>
            <person name="Honchak B.M."/>
            <person name="Karbach L.E."/>
            <person name="Land M.L."/>
            <person name="Lapidus A."/>
            <person name="Larimer F.W."/>
            <person name="Mikhailova N."/>
            <person name="Pitluck S."/>
            <person name="Pierson B.K."/>
            <person name="Blankenship R.E."/>
        </authorList>
    </citation>
    <scope>NUCLEOTIDE SEQUENCE [LARGE SCALE GENOMIC DNA]</scope>
    <source>
        <strain>ATCC 29366 / DSM 635 / J-10-fl</strain>
    </source>
</reference>
<organism>
    <name type="scientific">Chloroflexus aurantiacus (strain ATCC 29366 / DSM 635 / J-10-fl)</name>
    <dbReference type="NCBI Taxonomy" id="324602"/>
    <lineage>
        <taxon>Bacteria</taxon>
        <taxon>Bacillati</taxon>
        <taxon>Chloroflexota</taxon>
        <taxon>Chloroflexia</taxon>
        <taxon>Chloroflexales</taxon>
        <taxon>Chloroflexineae</taxon>
        <taxon>Chloroflexaceae</taxon>
        <taxon>Chloroflexus</taxon>
    </lineage>
</organism>
<protein>
    <recommendedName>
        <fullName evidence="1">3-methyl-2-oxobutanoate hydroxymethyltransferase</fullName>
        <ecNumber evidence="1">2.1.2.11</ecNumber>
    </recommendedName>
    <alternativeName>
        <fullName evidence="1">Ketopantoate hydroxymethyltransferase</fullName>
        <shortName evidence="1">KPHMT</shortName>
    </alternativeName>
</protein>